<accession>Q2NRR9</accession>
<comment type="function">
    <text evidence="1">Hydrolyzes ribosome-free peptidyl-tRNAs (with 1 or more amino acids incorporated), which drop off the ribosome during protein synthesis, or as a result of ribosome stalling.</text>
</comment>
<comment type="function">
    <text evidence="1">Catalyzes the release of premature peptidyl moieties from peptidyl-tRNA molecules trapped in stalled 50S ribosomal subunits, and thus maintains levels of free tRNAs and 50S ribosomes.</text>
</comment>
<comment type="catalytic activity">
    <reaction evidence="1">
        <text>an N-acyl-L-alpha-aminoacyl-tRNA + H2O = an N-acyl-L-amino acid + a tRNA + H(+)</text>
        <dbReference type="Rhea" id="RHEA:54448"/>
        <dbReference type="Rhea" id="RHEA-COMP:10123"/>
        <dbReference type="Rhea" id="RHEA-COMP:13883"/>
        <dbReference type="ChEBI" id="CHEBI:15377"/>
        <dbReference type="ChEBI" id="CHEBI:15378"/>
        <dbReference type="ChEBI" id="CHEBI:59874"/>
        <dbReference type="ChEBI" id="CHEBI:78442"/>
        <dbReference type="ChEBI" id="CHEBI:138191"/>
        <dbReference type="EC" id="3.1.1.29"/>
    </reaction>
</comment>
<comment type="subunit">
    <text evidence="1">Monomer.</text>
</comment>
<comment type="subcellular location">
    <subcellularLocation>
        <location evidence="1">Cytoplasm</location>
    </subcellularLocation>
</comment>
<comment type="similarity">
    <text evidence="1">Belongs to the PTH family.</text>
</comment>
<organism>
    <name type="scientific">Sodalis glossinidius (strain morsitans)</name>
    <dbReference type="NCBI Taxonomy" id="343509"/>
    <lineage>
        <taxon>Bacteria</taxon>
        <taxon>Pseudomonadati</taxon>
        <taxon>Pseudomonadota</taxon>
        <taxon>Gammaproteobacteria</taxon>
        <taxon>Enterobacterales</taxon>
        <taxon>Bruguierivoracaceae</taxon>
        <taxon>Sodalis</taxon>
    </lineage>
</organism>
<feature type="chain" id="PRO_0000264110" description="Peptidyl-tRNA hydrolase">
    <location>
        <begin position="1"/>
        <end position="194"/>
    </location>
</feature>
<feature type="active site" description="Proton acceptor" evidence="1">
    <location>
        <position position="21"/>
    </location>
</feature>
<feature type="binding site" evidence="1">
    <location>
        <position position="16"/>
    </location>
    <ligand>
        <name>tRNA</name>
        <dbReference type="ChEBI" id="CHEBI:17843"/>
    </ligand>
</feature>
<feature type="binding site" evidence="1">
    <location>
        <position position="67"/>
    </location>
    <ligand>
        <name>tRNA</name>
        <dbReference type="ChEBI" id="CHEBI:17843"/>
    </ligand>
</feature>
<feature type="binding site" evidence="1">
    <location>
        <position position="69"/>
    </location>
    <ligand>
        <name>tRNA</name>
        <dbReference type="ChEBI" id="CHEBI:17843"/>
    </ligand>
</feature>
<feature type="binding site" evidence="1">
    <location>
        <position position="115"/>
    </location>
    <ligand>
        <name>tRNA</name>
        <dbReference type="ChEBI" id="CHEBI:17843"/>
    </ligand>
</feature>
<feature type="site" description="Discriminates between blocked and unblocked aminoacyl-tRNA" evidence="1">
    <location>
        <position position="11"/>
    </location>
</feature>
<feature type="site" description="Stabilizes the basic form of H active site to accept a proton" evidence="1">
    <location>
        <position position="94"/>
    </location>
</feature>
<reference key="1">
    <citation type="journal article" date="2006" name="Genome Res.">
        <title>Massive genome erosion and functional adaptations provide insights into the symbiotic lifestyle of Sodalis glossinidius in the tsetse host.</title>
        <authorList>
            <person name="Toh H."/>
            <person name="Weiss B.L."/>
            <person name="Perkin S.A.H."/>
            <person name="Yamashita A."/>
            <person name="Oshima K."/>
            <person name="Hattori M."/>
            <person name="Aksoy S."/>
        </authorList>
    </citation>
    <scope>NUCLEOTIDE SEQUENCE [LARGE SCALE GENOMIC DNA]</scope>
    <source>
        <strain>morsitans</strain>
    </source>
</reference>
<sequence>MKIKLIVGLANPGAEYAATRHNAGAWYVELLAERYRQTLKEESKFYGYTGRLTLGGQDVRLLVPTTFMNLSGKAVAAMATFYRIAPEDILVAHDELDLLPGSARLKLGGGHGGHNGLKDIISRLGNNPQFHRLRIGISHPGDKNQVVGFVLGKPPTAERQLIDSAIDEAVRCTEILVTQDAVKAMNRLHAYRPG</sequence>
<gene>
    <name evidence="1" type="primary">pth</name>
    <name type="ordered locus">SG1881</name>
</gene>
<name>PTH_SODGM</name>
<keyword id="KW-0963">Cytoplasm</keyword>
<keyword id="KW-0378">Hydrolase</keyword>
<keyword id="KW-0694">RNA-binding</keyword>
<keyword id="KW-0820">tRNA-binding</keyword>
<protein>
    <recommendedName>
        <fullName evidence="1">Peptidyl-tRNA hydrolase</fullName>
        <shortName evidence="1">Pth</shortName>
        <ecNumber evidence="1">3.1.1.29</ecNumber>
    </recommendedName>
</protein>
<evidence type="ECO:0000255" key="1">
    <source>
        <dbReference type="HAMAP-Rule" id="MF_00083"/>
    </source>
</evidence>
<dbReference type="EC" id="3.1.1.29" evidence="1"/>
<dbReference type="EMBL" id="AP008232">
    <property type="protein sequence ID" value="BAE75156.1"/>
    <property type="molecule type" value="Genomic_DNA"/>
</dbReference>
<dbReference type="SMR" id="Q2NRR9"/>
<dbReference type="STRING" id="343509.SG1881"/>
<dbReference type="KEGG" id="sgl:SG1881"/>
<dbReference type="eggNOG" id="COG0193">
    <property type="taxonomic scope" value="Bacteria"/>
</dbReference>
<dbReference type="HOGENOM" id="CLU_062456_3_1_6"/>
<dbReference type="Proteomes" id="UP000001932">
    <property type="component" value="Chromosome"/>
</dbReference>
<dbReference type="GO" id="GO:0005737">
    <property type="term" value="C:cytoplasm"/>
    <property type="evidence" value="ECO:0007669"/>
    <property type="project" value="UniProtKB-SubCell"/>
</dbReference>
<dbReference type="GO" id="GO:0004045">
    <property type="term" value="F:peptidyl-tRNA hydrolase activity"/>
    <property type="evidence" value="ECO:0007669"/>
    <property type="project" value="UniProtKB-UniRule"/>
</dbReference>
<dbReference type="GO" id="GO:0000049">
    <property type="term" value="F:tRNA binding"/>
    <property type="evidence" value="ECO:0007669"/>
    <property type="project" value="UniProtKB-UniRule"/>
</dbReference>
<dbReference type="GO" id="GO:0006515">
    <property type="term" value="P:protein quality control for misfolded or incompletely synthesized proteins"/>
    <property type="evidence" value="ECO:0007669"/>
    <property type="project" value="UniProtKB-UniRule"/>
</dbReference>
<dbReference type="GO" id="GO:0072344">
    <property type="term" value="P:rescue of stalled ribosome"/>
    <property type="evidence" value="ECO:0007669"/>
    <property type="project" value="UniProtKB-UniRule"/>
</dbReference>
<dbReference type="CDD" id="cd00462">
    <property type="entry name" value="PTH"/>
    <property type="match status" value="1"/>
</dbReference>
<dbReference type="FunFam" id="3.40.50.1470:FF:000001">
    <property type="entry name" value="Peptidyl-tRNA hydrolase"/>
    <property type="match status" value="1"/>
</dbReference>
<dbReference type="Gene3D" id="3.40.50.1470">
    <property type="entry name" value="Peptidyl-tRNA hydrolase"/>
    <property type="match status" value="1"/>
</dbReference>
<dbReference type="HAMAP" id="MF_00083">
    <property type="entry name" value="Pept_tRNA_hydro_bact"/>
    <property type="match status" value="1"/>
</dbReference>
<dbReference type="InterPro" id="IPR001328">
    <property type="entry name" value="Pept_tRNA_hydro"/>
</dbReference>
<dbReference type="InterPro" id="IPR018171">
    <property type="entry name" value="Pept_tRNA_hydro_CS"/>
</dbReference>
<dbReference type="InterPro" id="IPR036416">
    <property type="entry name" value="Pept_tRNA_hydro_sf"/>
</dbReference>
<dbReference type="NCBIfam" id="TIGR00447">
    <property type="entry name" value="pth"/>
    <property type="match status" value="1"/>
</dbReference>
<dbReference type="PANTHER" id="PTHR17224">
    <property type="entry name" value="PEPTIDYL-TRNA HYDROLASE"/>
    <property type="match status" value="1"/>
</dbReference>
<dbReference type="PANTHER" id="PTHR17224:SF1">
    <property type="entry name" value="PEPTIDYL-TRNA HYDROLASE"/>
    <property type="match status" value="1"/>
</dbReference>
<dbReference type="Pfam" id="PF01195">
    <property type="entry name" value="Pept_tRNA_hydro"/>
    <property type="match status" value="1"/>
</dbReference>
<dbReference type="SUPFAM" id="SSF53178">
    <property type="entry name" value="Peptidyl-tRNA hydrolase-like"/>
    <property type="match status" value="1"/>
</dbReference>
<dbReference type="PROSITE" id="PS01195">
    <property type="entry name" value="PEPT_TRNA_HYDROL_1"/>
    <property type="match status" value="1"/>
</dbReference>
<dbReference type="PROSITE" id="PS01196">
    <property type="entry name" value="PEPT_TRNA_HYDROL_2"/>
    <property type="match status" value="1"/>
</dbReference>
<proteinExistence type="inferred from homology"/>